<evidence type="ECO:0000250" key="1"/>
<evidence type="ECO:0000305" key="2"/>
<evidence type="ECO:0000305" key="3">
    <source>
    </source>
</evidence>
<comment type="function">
    <text evidence="3">Involved in the metabolism of galactose. Catalyzes the conversion of UDP-galactose (UDP-Gal) to UDP-glucose (UDP-Glc) through a mechanism involving the transient reduction of NAD (Probable).</text>
</comment>
<comment type="catalytic activity">
    <reaction>
        <text>UDP-alpha-D-glucose = UDP-alpha-D-galactose</text>
        <dbReference type="Rhea" id="RHEA:22168"/>
        <dbReference type="ChEBI" id="CHEBI:58885"/>
        <dbReference type="ChEBI" id="CHEBI:66914"/>
        <dbReference type="EC" id="5.1.3.2"/>
    </reaction>
</comment>
<comment type="cofactor">
    <cofactor evidence="1">
        <name>NAD(+)</name>
        <dbReference type="ChEBI" id="CHEBI:57540"/>
    </cofactor>
</comment>
<comment type="pathway">
    <text>Carbohydrate metabolism; galactose metabolism.</text>
</comment>
<comment type="subunit">
    <text evidence="1">Homodimer.</text>
</comment>
<comment type="similarity">
    <text evidence="2">Belongs to the NAD(P)-dependent epimerase/dehydratase family.</text>
</comment>
<accession>Q45291</accession>
<name>GALE_CORGL</name>
<proteinExistence type="inferred from homology"/>
<keyword id="KW-0119">Carbohydrate metabolism</keyword>
<keyword id="KW-0299">Galactose metabolism</keyword>
<keyword id="KW-0413">Isomerase</keyword>
<keyword id="KW-0520">NAD</keyword>
<keyword id="KW-1185">Reference proteome</keyword>
<dbReference type="EC" id="5.1.3.2"/>
<dbReference type="EMBL" id="Z49823">
    <property type="protein sequence ID" value="CAA89986.1"/>
    <property type="molecule type" value="Genomic_DNA"/>
</dbReference>
<dbReference type="EMBL" id="BA000036">
    <property type="protein sequence ID" value="BAB99314.1"/>
    <property type="molecule type" value="Genomic_DNA"/>
</dbReference>
<dbReference type="EMBL" id="BX927153">
    <property type="protein sequence ID" value="CAF20262.1"/>
    <property type="molecule type" value="Genomic_DNA"/>
</dbReference>
<dbReference type="PIR" id="JC5168">
    <property type="entry name" value="JC5168"/>
</dbReference>
<dbReference type="RefSeq" id="NP_601127.1">
    <property type="nucleotide sequence ID" value="NC_003450.3"/>
</dbReference>
<dbReference type="RefSeq" id="WP_011014754.1">
    <property type="nucleotide sequence ID" value="NC_006958.1"/>
</dbReference>
<dbReference type="SMR" id="Q45291"/>
<dbReference type="STRING" id="196627.cg2104"/>
<dbReference type="GeneID" id="1019878"/>
<dbReference type="KEGG" id="cgb:cg2104"/>
<dbReference type="KEGG" id="cgl:Cgl1921"/>
<dbReference type="PATRIC" id="fig|196627.13.peg.1859"/>
<dbReference type="eggNOG" id="COG1087">
    <property type="taxonomic scope" value="Bacteria"/>
</dbReference>
<dbReference type="HOGENOM" id="CLU_007383_1_10_11"/>
<dbReference type="OrthoDB" id="9801785at2"/>
<dbReference type="BioCyc" id="CORYNE:G18NG-11513-MONOMER"/>
<dbReference type="UniPathway" id="UPA00214"/>
<dbReference type="Proteomes" id="UP000000582">
    <property type="component" value="Chromosome"/>
</dbReference>
<dbReference type="Proteomes" id="UP000001009">
    <property type="component" value="Chromosome"/>
</dbReference>
<dbReference type="GO" id="GO:0003978">
    <property type="term" value="F:UDP-glucose 4-epimerase activity"/>
    <property type="evidence" value="ECO:0007669"/>
    <property type="project" value="UniProtKB-EC"/>
</dbReference>
<dbReference type="GO" id="GO:0033499">
    <property type="term" value="P:galactose catabolic process via UDP-galactose, Leloir pathway"/>
    <property type="evidence" value="ECO:0007669"/>
    <property type="project" value="TreeGrafter"/>
</dbReference>
<dbReference type="CDD" id="cd05247">
    <property type="entry name" value="UDP_G4E_1_SDR_e"/>
    <property type="match status" value="1"/>
</dbReference>
<dbReference type="Gene3D" id="3.40.50.720">
    <property type="entry name" value="NAD(P)-binding Rossmann-like Domain"/>
    <property type="match status" value="1"/>
</dbReference>
<dbReference type="Gene3D" id="3.90.25.10">
    <property type="entry name" value="UDP-galactose 4-epimerase, domain 1"/>
    <property type="match status" value="1"/>
</dbReference>
<dbReference type="InterPro" id="IPR001509">
    <property type="entry name" value="Epimerase_deHydtase"/>
</dbReference>
<dbReference type="InterPro" id="IPR036291">
    <property type="entry name" value="NAD(P)-bd_dom_sf"/>
</dbReference>
<dbReference type="InterPro" id="IPR005886">
    <property type="entry name" value="UDP_G4E"/>
</dbReference>
<dbReference type="NCBIfam" id="TIGR01179">
    <property type="entry name" value="galE"/>
    <property type="match status" value="1"/>
</dbReference>
<dbReference type="PANTHER" id="PTHR43725:SF53">
    <property type="entry name" value="UDP-ARABINOSE 4-EPIMERASE 1"/>
    <property type="match status" value="1"/>
</dbReference>
<dbReference type="PANTHER" id="PTHR43725">
    <property type="entry name" value="UDP-GLUCOSE 4-EPIMERASE"/>
    <property type="match status" value="1"/>
</dbReference>
<dbReference type="Pfam" id="PF01370">
    <property type="entry name" value="Epimerase"/>
    <property type="match status" value="1"/>
</dbReference>
<dbReference type="SUPFAM" id="SSF51735">
    <property type="entry name" value="NAD(P)-binding Rossmann-fold domains"/>
    <property type="match status" value="1"/>
</dbReference>
<sequence length="329" mass="35263">MKLLVTGGAGYVGSVAAAVLLEHGHDVTIIDNFSTGNREAVPADARLIEGDVNDVVEEVLSEGGFEGVVHFAARSLVGESVEKPNEYWHDNVVTALTLLDAMRAHGVNNLVFSSTAATYGEPDVVPITEDMPTQPTNAYGATKLSIDYAITSYAAAFGLAATSLRYFNVAGAYGNIGENREVETHLIPLVLQVATGHREKTFMFGDDWPTPDGTAVRDYIHILDLAKAHVLALESNEAGKHRIFNLGSGDGYSVKQVVEMCREVTGHPIPAEVAPRRAGDPATLIASSEKAKQELGWTPEHTDLRTIVEDAWAFTSALGDRSHAAKKKA</sequence>
<organism>
    <name type="scientific">Corynebacterium glutamicum (strain ATCC 13032 / DSM 20300 / JCM 1318 / BCRC 11384 / CCUG 27702 / LMG 3730 / NBRC 12168 / NCIMB 10025 / NRRL B-2784 / 534)</name>
    <dbReference type="NCBI Taxonomy" id="196627"/>
    <lineage>
        <taxon>Bacteria</taxon>
        <taxon>Bacillati</taxon>
        <taxon>Actinomycetota</taxon>
        <taxon>Actinomycetes</taxon>
        <taxon>Mycobacteriales</taxon>
        <taxon>Corynebacteriaceae</taxon>
        <taxon>Corynebacterium</taxon>
    </lineage>
</organism>
<feature type="chain" id="PRO_0000183202" description="UDP-glucose 4-epimerase">
    <location>
        <begin position="1"/>
        <end position="329"/>
    </location>
</feature>
<feature type="active site" description="Proton acceptor" evidence="1">
    <location>
        <position position="139"/>
    </location>
</feature>
<feature type="binding site" evidence="1">
    <location>
        <begin position="11"/>
        <end position="12"/>
    </location>
    <ligand>
        <name>NAD(+)</name>
        <dbReference type="ChEBI" id="CHEBI:57540"/>
    </ligand>
</feature>
<feature type="binding site" evidence="1">
    <location>
        <begin position="31"/>
        <end position="36"/>
    </location>
    <ligand>
        <name>NAD(+)</name>
        <dbReference type="ChEBI" id="CHEBI:57540"/>
    </ligand>
</feature>
<feature type="binding site" evidence="1">
    <location>
        <begin position="51"/>
        <end position="52"/>
    </location>
    <ligand>
        <name>NAD(+)</name>
        <dbReference type="ChEBI" id="CHEBI:57540"/>
    </ligand>
</feature>
<feature type="binding site" evidence="1">
    <location>
        <begin position="71"/>
        <end position="75"/>
    </location>
    <ligand>
        <name>NAD(+)</name>
        <dbReference type="ChEBI" id="CHEBI:57540"/>
    </ligand>
</feature>
<feature type="binding site" evidence="1">
    <location>
        <position position="115"/>
    </location>
    <ligand>
        <name>NAD(+)</name>
        <dbReference type="ChEBI" id="CHEBI:57540"/>
    </ligand>
</feature>
<feature type="binding site" evidence="1">
    <location>
        <position position="115"/>
    </location>
    <ligand>
        <name>substrate</name>
    </ligand>
</feature>
<feature type="binding site" evidence="1">
    <location>
        <position position="139"/>
    </location>
    <ligand>
        <name>NAD(+)</name>
        <dbReference type="ChEBI" id="CHEBI:57540"/>
    </ligand>
</feature>
<feature type="binding site" evidence="1">
    <location>
        <position position="139"/>
    </location>
    <ligand>
        <name>substrate</name>
    </ligand>
</feature>
<feature type="binding site" evidence="1">
    <location>
        <position position="143"/>
    </location>
    <ligand>
        <name>NAD(+)</name>
        <dbReference type="ChEBI" id="CHEBI:57540"/>
    </ligand>
</feature>
<feature type="binding site" evidence="1">
    <location>
        <position position="167"/>
    </location>
    <ligand>
        <name>NAD(+)</name>
        <dbReference type="ChEBI" id="CHEBI:57540"/>
    </ligand>
</feature>
<feature type="binding site" evidence="1">
    <location>
        <position position="168"/>
    </location>
    <ligand>
        <name>substrate</name>
    </ligand>
</feature>
<feature type="binding site" evidence="1">
    <location>
        <begin position="185"/>
        <end position="186"/>
    </location>
    <ligand>
        <name>substrate</name>
    </ligand>
</feature>
<feature type="binding site" evidence="1">
    <location>
        <begin position="202"/>
        <end position="204"/>
    </location>
    <ligand>
        <name>substrate</name>
    </ligand>
</feature>
<feature type="binding site" evidence="1">
    <location>
        <position position="217"/>
    </location>
    <ligand>
        <name>substrate</name>
    </ligand>
</feature>
<feature type="binding site" evidence="1">
    <location>
        <begin position="277"/>
        <end position="280"/>
    </location>
    <ligand>
        <name>substrate</name>
    </ligand>
</feature>
<feature type="sequence conflict" description="In Ref. 1; CAA89986." evidence="2" ref="1">
    <original>A</original>
    <variation>R</variation>
    <location>
        <position position="16"/>
    </location>
</feature>
<feature type="sequence conflict" description="In Ref. 1; CAA89986." evidence="2" ref="1">
    <original>S</original>
    <variation>L</variation>
    <location>
        <position position="61"/>
    </location>
</feature>
<feature type="sequence conflict" description="In Ref. 1; CAA89986." evidence="2" ref="1">
    <original>T</original>
    <variation>I</variation>
    <location>
        <position position="201"/>
    </location>
</feature>
<reference key="1">
    <citation type="journal article" date="1996" name="Gene">
        <title>The galE gene encoding the UDP-galactose 4-epimerase of Brevibacterium lactofermentum is coupled transcriptionally to the dmdR gene.</title>
        <authorList>
            <person name="Oguiza J.A."/>
            <person name="Marcos A.T."/>
            <person name="Malumbres M."/>
            <person name="Martin J.F."/>
        </authorList>
    </citation>
    <scope>NUCLEOTIDE SEQUENCE [GENOMIC DNA]</scope>
    <scope>FUNCTION</scope>
    <source>
        <strain>ATCC 13869 / DSMZ 1412 / NCIMB 9567</strain>
    </source>
</reference>
<reference key="2">
    <citation type="journal article" date="2003" name="Appl. Microbiol. Biotechnol.">
        <title>The Corynebacterium glutamicum genome: features and impacts on biotechnological processes.</title>
        <authorList>
            <person name="Ikeda M."/>
            <person name="Nakagawa S."/>
        </authorList>
    </citation>
    <scope>NUCLEOTIDE SEQUENCE [LARGE SCALE GENOMIC DNA]</scope>
    <source>
        <strain>ATCC 13032 / DSM 20300 / JCM 1318 / BCRC 11384 / CCUG 27702 / LMG 3730 / NBRC 12168 / NCIMB 10025 / NRRL B-2784 / 534</strain>
    </source>
</reference>
<reference key="3">
    <citation type="journal article" date="2003" name="J. Biotechnol.">
        <title>The complete Corynebacterium glutamicum ATCC 13032 genome sequence and its impact on the production of L-aspartate-derived amino acids and vitamins.</title>
        <authorList>
            <person name="Kalinowski J."/>
            <person name="Bathe B."/>
            <person name="Bartels D."/>
            <person name="Bischoff N."/>
            <person name="Bott M."/>
            <person name="Burkovski A."/>
            <person name="Dusch N."/>
            <person name="Eggeling L."/>
            <person name="Eikmanns B.J."/>
            <person name="Gaigalat L."/>
            <person name="Goesmann A."/>
            <person name="Hartmann M."/>
            <person name="Huthmacher K."/>
            <person name="Kraemer R."/>
            <person name="Linke B."/>
            <person name="McHardy A.C."/>
            <person name="Meyer F."/>
            <person name="Moeckel B."/>
            <person name="Pfefferle W."/>
            <person name="Puehler A."/>
            <person name="Rey D.A."/>
            <person name="Rueckert C."/>
            <person name="Rupp O."/>
            <person name="Sahm H."/>
            <person name="Wendisch V.F."/>
            <person name="Wiegraebe I."/>
            <person name="Tauch A."/>
        </authorList>
    </citation>
    <scope>NUCLEOTIDE SEQUENCE [LARGE SCALE GENOMIC DNA]</scope>
    <source>
        <strain>ATCC 13032 / DSM 20300 / JCM 1318 / BCRC 11384 / CCUG 27702 / LMG 3730 / NBRC 12168 / NCIMB 10025 / NRRL B-2784 / 534</strain>
    </source>
</reference>
<gene>
    <name type="primary">galE</name>
    <name type="ordered locus">Cgl1921</name>
    <name type="ordered locus">cg2104</name>
</gene>
<protein>
    <recommendedName>
        <fullName>UDP-glucose 4-epimerase</fullName>
        <ecNumber>5.1.3.2</ecNumber>
    </recommendedName>
    <alternativeName>
        <fullName>Galactowaldenase</fullName>
    </alternativeName>
    <alternativeName>
        <fullName>UDP-galactose 4-epimerase</fullName>
    </alternativeName>
</protein>